<sequence length="449" mass="50099">MDSSVTTGRSGIGTGQGSPAASGQPISKAGQAIPNLRDRIPKLEPRRRKQEPSNPTPVPETPALPPRPDPSTLVFQTPVRRILLLKDHELFLASPSFNLILSFVFSLSESVADTPISAIKDSDLSEPVKAILRILDETEALCKESPPDDQGGSRFGNKTFRLFLDKVKQRGHQWHAAFLGGKLPDAAVTEASAYLNQSFGNRTRIDYGSGHELNFIMWLLCLYQLSVLEQSDFKAVVLRVFARYLEVMRLIQMTYYLEPAGSHGVWGLDDYQFLPFLFGASQLLHHHFITPRAIHQELTLEEFGHDFLYLGQVAFVNSTKTVKGLRWHSPMLDDISSAKNWEKIEGGMRRMFVSEVLKKLPVMQHFLFGSLIPAAEGMSEQDPNALGSEENEEEGGEVEVYDDSDGKRHVHQPTGWGDCCGIKVPSSLAAAEEMRKRGQVESLRRIPFD</sequence>
<protein>
    <recommendedName>
        <fullName>Serine/threonine-protein phosphatase 2A activator 2</fullName>
        <ecNumber>5.2.1.8</ecNumber>
    </recommendedName>
    <alternativeName>
        <fullName>Peptidyl-prolyl cis-trans isomerase PTPA-2</fullName>
        <shortName>PPIase PTPA-2</shortName>
        <shortName>Rotamase PTPA-2</shortName>
    </alternativeName>
    <alternativeName>
        <fullName>Phosphotyrosyl phosphatase activator 2</fullName>
    </alternativeName>
</protein>
<keyword id="KW-0963">Cytoplasm</keyword>
<keyword id="KW-0413">Isomerase</keyword>
<keyword id="KW-1185">Reference proteome</keyword>
<keyword id="KW-0697">Rotamase</keyword>
<proteinExistence type="inferred from homology"/>
<organism>
    <name type="scientific">Neurospora crassa (strain ATCC 24698 / 74-OR23-1A / CBS 708.71 / DSM 1257 / FGSC 987)</name>
    <dbReference type="NCBI Taxonomy" id="367110"/>
    <lineage>
        <taxon>Eukaryota</taxon>
        <taxon>Fungi</taxon>
        <taxon>Dikarya</taxon>
        <taxon>Ascomycota</taxon>
        <taxon>Pezizomycotina</taxon>
        <taxon>Sordariomycetes</taxon>
        <taxon>Sordariomycetidae</taxon>
        <taxon>Sordariales</taxon>
        <taxon>Sordariaceae</taxon>
        <taxon>Neurospora</taxon>
    </lineage>
</organism>
<feature type="chain" id="PRO_0000226116" description="Serine/threonine-protein phosphatase 2A activator 2">
    <location>
        <begin position="1"/>
        <end position="449"/>
    </location>
</feature>
<feature type="region of interest" description="Disordered" evidence="2">
    <location>
        <begin position="1"/>
        <end position="72"/>
    </location>
</feature>
<feature type="region of interest" description="Disordered" evidence="2">
    <location>
        <begin position="378"/>
        <end position="416"/>
    </location>
</feature>
<feature type="compositionally biased region" description="Pro residues" evidence="2">
    <location>
        <begin position="54"/>
        <end position="69"/>
    </location>
</feature>
<feature type="compositionally biased region" description="Acidic residues" evidence="2">
    <location>
        <begin position="389"/>
        <end position="403"/>
    </location>
</feature>
<comment type="function">
    <text evidence="1">PPIases accelerate the folding of proteins. It catalyzes the cis-trans isomerization of proline imidic peptide bonds in oligopeptides. Acts as a regulatory subunit for PP2A-like phosphatases modulating their activity or substrate specificity, probably by inducing a conformational change in the catalytic subunit, a direct target of the PPIase. Can reactivate inactive phosphatase PP2A-phosphatase methylesterase complexes (PP2Ai) in presence of ATP and Mg(2+) by dissociating the inactive form from the complex (By similarity).</text>
</comment>
<comment type="catalytic activity">
    <reaction>
        <text>[protein]-peptidylproline (omega=180) = [protein]-peptidylproline (omega=0)</text>
        <dbReference type="Rhea" id="RHEA:16237"/>
        <dbReference type="Rhea" id="RHEA-COMP:10747"/>
        <dbReference type="Rhea" id="RHEA-COMP:10748"/>
        <dbReference type="ChEBI" id="CHEBI:83833"/>
        <dbReference type="ChEBI" id="CHEBI:83834"/>
        <dbReference type="EC" id="5.2.1.8"/>
    </reaction>
</comment>
<comment type="subcellular location">
    <subcellularLocation>
        <location evidence="1">Cytoplasm</location>
    </subcellularLocation>
</comment>
<comment type="similarity">
    <text evidence="3">Belongs to the PTPA-type PPIase family.</text>
</comment>
<gene>
    <name type="primary">rrd-2</name>
    <name type="ORF">NCU03269</name>
</gene>
<reference key="1">
    <citation type="journal article" date="2003" name="Nature">
        <title>The genome sequence of the filamentous fungus Neurospora crassa.</title>
        <authorList>
            <person name="Galagan J.E."/>
            <person name="Calvo S.E."/>
            <person name="Borkovich K.A."/>
            <person name="Selker E.U."/>
            <person name="Read N.D."/>
            <person name="Jaffe D.B."/>
            <person name="FitzHugh W."/>
            <person name="Ma L.-J."/>
            <person name="Smirnov S."/>
            <person name="Purcell S."/>
            <person name="Rehman B."/>
            <person name="Elkins T."/>
            <person name="Engels R."/>
            <person name="Wang S."/>
            <person name="Nielsen C.B."/>
            <person name="Butler J."/>
            <person name="Endrizzi M."/>
            <person name="Qui D."/>
            <person name="Ianakiev P."/>
            <person name="Bell-Pedersen D."/>
            <person name="Nelson M.A."/>
            <person name="Werner-Washburne M."/>
            <person name="Selitrennikoff C.P."/>
            <person name="Kinsey J.A."/>
            <person name="Braun E.L."/>
            <person name="Zelter A."/>
            <person name="Schulte U."/>
            <person name="Kothe G.O."/>
            <person name="Jedd G."/>
            <person name="Mewes H.-W."/>
            <person name="Staben C."/>
            <person name="Marcotte E."/>
            <person name="Greenberg D."/>
            <person name="Roy A."/>
            <person name="Foley K."/>
            <person name="Naylor J."/>
            <person name="Stange-Thomann N."/>
            <person name="Barrett R."/>
            <person name="Gnerre S."/>
            <person name="Kamal M."/>
            <person name="Kamvysselis M."/>
            <person name="Mauceli E.W."/>
            <person name="Bielke C."/>
            <person name="Rudd S."/>
            <person name="Frishman D."/>
            <person name="Krystofova S."/>
            <person name="Rasmussen C."/>
            <person name="Metzenberg R.L."/>
            <person name="Perkins D.D."/>
            <person name="Kroken S."/>
            <person name="Cogoni C."/>
            <person name="Macino G."/>
            <person name="Catcheside D.E.A."/>
            <person name="Li W."/>
            <person name="Pratt R.J."/>
            <person name="Osmani S.A."/>
            <person name="DeSouza C.P.C."/>
            <person name="Glass N.L."/>
            <person name="Orbach M.J."/>
            <person name="Berglund J.A."/>
            <person name="Voelker R."/>
            <person name="Yarden O."/>
            <person name="Plamann M."/>
            <person name="Seiler S."/>
            <person name="Dunlap J.C."/>
            <person name="Radford A."/>
            <person name="Aramayo R."/>
            <person name="Natvig D.O."/>
            <person name="Alex L.A."/>
            <person name="Mannhaupt G."/>
            <person name="Ebbole D.J."/>
            <person name="Freitag M."/>
            <person name="Paulsen I."/>
            <person name="Sachs M.S."/>
            <person name="Lander E.S."/>
            <person name="Nusbaum C."/>
            <person name="Birren B.W."/>
        </authorList>
    </citation>
    <scope>NUCLEOTIDE SEQUENCE [LARGE SCALE GENOMIC DNA]</scope>
    <source>
        <strain>ATCC 24698 / 74-OR23-1A / CBS 708.71 / DSM 1257 / FGSC 987</strain>
    </source>
</reference>
<dbReference type="EC" id="5.2.1.8"/>
<dbReference type="EMBL" id="CM002236">
    <property type="protein sequence ID" value="EAA35186.1"/>
    <property type="molecule type" value="Genomic_DNA"/>
</dbReference>
<dbReference type="RefSeq" id="XP_964422.1">
    <property type="nucleotide sequence ID" value="XM_959329.3"/>
</dbReference>
<dbReference type="SMR" id="Q7SEF9"/>
<dbReference type="FunCoup" id="Q7SEF9">
    <property type="interactions" value="523"/>
</dbReference>
<dbReference type="STRING" id="367110.Q7SEF9"/>
<dbReference type="PaxDb" id="5141-EFNCRP00000002930"/>
<dbReference type="EnsemblFungi" id="EAA35186">
    <property type="protein sequence ID" value="EAA35186"/>
    <property type="gene ID" value="NCU03269"/>
</dbReference>
<dbReference type="GeneID" id="3880571"/>
<dbReference type="KEGG" id="ncr:NCU03269"/>
<dbReference type="VEuPathDB" id="FungiDB:NCU03269"/>
<dbReference type="HOGENOM" id="CLU_030733_0_0_1"/>
<dbReference type="InParanoid" id="Q7SEF9"/>
<dbReference type="OMA" id="SWIKINA"/>
<dbReference type="OrthoDB" id="16120at2759"/>
<dbReference type="Proteomes" id="UP000001805">
    <property type="component" value="Chromosome 1, Linkage Group I"/>
</dbReference>
<dbReference type="GO" id="GO:0005737">
    <property type="term" value="C:cytoplasm"/>
    <property type="evidence" value="ECO:0000318"/>
    <property type="project" value="GO_Central"/>
</dbReference>
<dbReference type="GO" id="GO:0005634">
    <property type="term" value="C:nucleus"/>
    <property type="evidence" value="ECO:0000318"/>
    <property type="project" value="GO_Central"/>
</dbReference>
<dbReference type="GO" id="GO:0000159">
    <property type="term" value="C:protein phosphatase type 2A complex"/>
    <property type="evidence" value="ECO:0000318"/>
    <property type="project" value="GO_Central"/>
</dbReference>
<dbReference type="GO" id="GO:0003755">
    <property type="term" value="F:peptidyl-prolyl cis-trans isomerase activity"/>
    <property type="evidence" value="ECO:0000318"/>
    <property type="project" value="GO_Central"/>
</dbReference>
<dbReference type="GO" id="GO:0008160">
    <property type="term" value="F:protein tyrosine phosphatase activator activity"/>
    <property type="evidence" value="ECO:0000318"/>
    <property type="project" value="GO_Central"/>
</dbReference>
<dbReference type="GO" id="GO:0007052">
    <property type="term" value="P:mitotic spindle organization"/>
    <property type="evidence" value="ECO:0000318"/>
    <property type="project" value="GO_Central"/>
</dbReference>
<dbReference type="CDD" id="cd04087">
    <property type="entry name" value="PTPA"/>
    <property type="match status" value="1"/>
</dbReference>
<dbReference type="FunFam" id="1.20.120.1150:FF:000002">
    <property type="entry name" value="Serine/threonine-protein phosphatase 2A activator"/>
    <property type="match status" value="1"/>
</dbReference>
<dbReference type="Gene3D" id="1.20.120.1150">
    <property type="match status" value="1"/>
</dbReference>
<dbReference type="InterPro" id="IPR004327">
    <property type="entry name" value="Phstyr_phstse_ac"/>
</dbReference>
<dbReference type="InterPro" id="IPR043170">
    <property type="entry name" value="PTPA_C_lid"/>
</dbReference>
<dbReference type="InterPro" id="IPR037218">
    <property type="entry name" value="PTPA_sf"/>
</dbReference>
<dbReference type="PANTHER" id="PTHR10012">
    <property type="entry name" value="SERINE/THREONINE-PROTEIN PHOSPHATASE 2A REGULATORY SUBUNIT B"/>
    <property type="match status" value="1"/>
</dbReference>
<dbReference type="PANTHER" id="PTHR10012:SF5">
    <property type="entry name" value="SERINE_THREONINE-PROTEIN PHOSPHATASE 2A ACTIVATOR 2"/>
    <property type="match status" value="1"/>
</dbReference>
<dbReference type="Pfam" id="PF03095">
    <property type="entry name" value="PTPA"/>
    <property type="match status" value="1"/>
</dbReference>
<dbReference type="PIRSF" id="PIRSF016325">
    <property type="entry name" value="Phstyr_phstse_ac"/>
    <property type="match status" value="1"/>
</dbReference>
<dbReference type="SUPFAM" id="SSF140984">
    <property type="entry name" value="PTPA-like"/>
    <property type="match status" value="1"/>
</dbReference>
<name>PTPA2_NEUCR</name>
<evidence type="ECO:0000250" key="1"/>
<evidence type="ECO:0000256" key="2">
    <source>
        <dbReference type="SAM" id="MobiDB-lite"/>
    </source>
</evidence>
<evidence type="ECO:0000305" key="3"/>
<accession>Q7SEF9</accession>